<organism>
    <name type="scientific">Protochlamydia amoebophila (strain UWE25)</name>
    <dbReference type="NCBI Taxonomy" id="264201"/>
    <lineage>
        <taxon>Bacteria</taxon>
        <taxon>Pseudomonadati</taxon>
        <taxon>Chlamydiota</taxon>
        <taxon>Chlamydiia</taxon>
        <taxon>Parachlamydiales</taxon>
        <taxon>Parachlamydiaceae</taxon>
        <taxon>Candidatus Protochlamydia</taxon>
    </lineage>
</organism>
<protein>
    <recommendedName>
        <fullName evidence="1">Large ribosomal subunit protein bL32</fullName>
    </recommendedName>
    <alternativeName>
        <fullName evidence="3">50S ribosomal protein L32</fullName>
    </alternativeName>
</protein>
<keyword id="KW-1185">Reference proteome</keyword>
<keyword id="KW-0687">Ribonucleoprotein</keyword>
<keyword id="KW-0689">Ribosomal protein</keyword>
<proteinExistence type="inferred from homology"/>
<name>RL32_PARUW</name>
<evidence type="ECO:0000255" key="1">
    <source>
        <dbReference type="HAMAP-Rule" id="MF_00340"/>
    </source>
</evidence>
<evidence type="ECO:0000256" key="2">
    <source>
        <dbReference type="SAM" id="MobiDB-lite"/>
    </source>
</evidence>
<evidence type="ECO:0000305" key="3"/>
<reference key="1">
    <citation type="journal article" date="2004" name="Science">
        <title>Illuminating the evolutionary history of chlamydiae.</title>
        <authorList>
            <person name="Horn M."/>
            <person name="Collingro A."/>
            <person name="Schmitz-Esser S."/>
            <person name="Beier C.L."/>
            <person name="Purkhold U."/>
            <person name="Fartmann B."/>
            <person name="Brandt P."/>
            <person name="Nyakatura G.J."/>
            <person name="Droege M."/>
            <person name="Frishman D."/>
            <person name="Rattei T."/>
            <person name="Mewes H.-W."/>
            <person name="Wagner M."/>
        </authorList>
    </citation>
    <scope>NUCLEOTIDE SEQUENCE [LARGE SCALE GENOMIC DNA]</scope>
    <source>
        <strain>UWE25</strain>
    </source>
</reference>
<dbReference type="EMBL" id="BX908798">
    <property type="protein sequence ID" value="CAF24039.1"/>
    <property type="status" value="ALT_INIT"/>
    <property type="molecule type" value="Genomic_DNA"/>
</dbReference>
<dbReference type="RefSeq" id="WP_011175864.1">
    <property type="nucleotide sequence ID" value="NC_005861.2"/>
</dbReference>
<dbReference type="SMR" id="Q6MBL0"/>
<dbReference type="STRING" id="264201.pc1315"/>
<dbReference type="eggNOG" id="COG0333">
    <property type="taxonomic scope" value="Bacteria"/>
</dbReference>
<dbReference type="HOGENOM" id="CLU_129084_1_3_0"/>
<dbReference type="OrthoDB" id="9812874at2"/>
<dbReference type="Proteomes" id="UP000000529">
    <property type="component" value="Chromosome"/>
</dbReference>
<dbReference type="GO" id="GO:0015934">
    <property type="term" value="C:large ribosomal subunit"/>
    <property type="evidence" value="ECO:0007669"/>
    <property type="project" value="InterPro"/>
</dbReference>
<dbReference type="GO" id="GO:0003735">
    <property type="term" value="F:structural constituent of ribosome"/>
    <property type="evidence" value="ECO:0007669"/>
    <property type="project" value="InterPro"/>
</dbReference>
<dbReference type="GO" id="GO:0006412">
    <property type="term" value="P:translation"/>
    <property type="evidence" value="ECO:0007669"/>
    <property type="project" value="UniProtKB-UniRule"/>
</dbReference>
<dbReference type="HAMAP" id="MF_00340">
    <property type="entry name" value="Ribosomal_bL32"/>
    <property type="match status" value="1"/>
</dbReference>
<dbReference type="InterPro" id="IPR002677">
    <property type="entry name" value="Ribosomal_bL32"/>
</dbReference>
<dbReference type="InterPro" id="IPR044957">
    <property type="entry name" value="Ribosomal_bL32_bact"/>
</dbReference>
<dbReference type="InterPro" id="IPR011332">
    <property type="entry name" value="Ribosomal_zn-bd"/>
</dbReference>
<dbReference type="NCBIfam" id="TIGR01031">
    <property type="entry name" value="rpmF_bact"/>
    <property type="match status" value="1"/>
</dbReference>
<dbReference type="PANTHER" id="PTHR35534">
    <property type="entry name" value="50S RIBOSOMAL PROTEIN L32"/>
    <property type="match status" value="1"/>
</dbReference>
<dbReference type="PANTHER" id="PTHR35534:SF1">
    <property type="entry name" value="LARGE RIBOSOMAL SUBUNIT PROTEIN BL32"/>
    <property type="match status" value="1"/>
</dbReference>
<dbReference type="Pfam" id="PF01783">
    <property type="entry name" value="Ribosomal_L32p"/>
    <property type="match status" value="1"/>
</dbReference>
<dbReference type="SUPFAM" id="SSF57829">
    <property type="entry name" value="Zn-binding ribosomal proteins"/>
    <property type="match status" value="1"/>
</dbReference>
<sequence length="60" mass="6554">MAVPRNRLSNARKNSKRAHHAKKPKSLSICSNCGTARLPHCSCKACGTYADRTPTTQEAQ</sequence>
<feature type="chain" id="PRO_0000172380" description="Large ribosomal subunit protein bL32">
    <location>
        <begin position="1"/>
        <end position="60"/>
    </location>
</feature>
<feature type="region of interest" description="Disordered" evidence="2">
    <location>
        <begin position="1"/>
        <end position="27"/>
    </location>
</feature>
<feature type="compositionally biased region" description="Basic residues" evidence="2">
    <location>
        <begin position="13"/>
        <end position="25"/>
    </location>
</feature>
<comment type="similarity">
    <text evidence="1">Belongs to the bacterial ribosomal protein bL32 family.</text>
</comment>
<comment type="sequence caution" evidence="3">
    <conflict type="erroneous initiation">
        <sequence resource="EMBL-CDS" id="CAF24039"/>
    </conflict>
</comment>
<gene>
    <name evidence="1" type="primary">rpmF</name>
    <name type="ordered locus">pc1315</name>
</gene>
<accession>Q6MBL0</accession>